<reference key="1">
    <citation type="journal article" date="2003" name="J. Neurochem.">
        <title>Novel excitatory Conus peptides define a new conotoxin superfamily.</title>
        <authorList>
            <person name="Jimenez E.C."/>
            <person name="Shetty R.P."/>
            <person name="Lirazan M."/>
            <person name="Rivier J."/>
            <person name="Walker C."/>
            <person name="Abogadie F.C."/>
            <person name="Yoshikami D."/>
            <person name="Cruz L.J."/>
            <person name="Olivera B.M."/>
        </authorList>
    </citation>
    <scope>NUCLEOTIDE SEQUENCE [MRNA]</scope>
    <source>
        <tissue>Venom duct</tissue>
    </source>
</reference>
<name>I1BF_CONRA</name>
<dbReference type="EMBL" id="AY208951">
    <property type="protein sequence ID" value="AAP41533.1"/>
    <property type="molecule type" value="mRNA"/>
</dbReference>
<dbReference type="SMR" id="Q7Z0A2"/>
<dbReference type="ConoServer" id="832">
    <property type="toxin name" value="R11.15"/>
</dbReference>
<dbReference type="GO" id="GO:0005576">
    <property type="term" value="C:extracellular region"/>
    <property type="evidence" value="ECO:0007669"/>
    <property type="project" value="UniProtKB-SubCell"/>
</dbReference>
<dbReference type="GO" id="GO:0017080">
    <property type="term" value="F:sodium channel regulator activity"/>
    <property type="evidence" value="ECO:0007669"/>
    <property type="project" value="UniProtKB-KW"/>
</dbReference>
<dbReference type="GO" id="GO:0090729">
    <property type="term" value="F:toxin activity"/>
    <property type="evidence" value="ECO:0007669"/>
    <property type="project" value="UniProtKB-KW"/>
</dbReference>
<dbReference type="Gene3D" id="4.10.40.80">
    <property type="match status" value="1"/>
</dbReference>
<dbReference type="InterPro" id="IPR013141">
    <property type="entry name" value="Conotoxin-I_CS"/>
</dbReference>
<dbReference type="InterPro" id="IPR012624">
    <property type="entry name" value="Toxin_19"/>
</dbReference>
<dbReference type="Pfam" id="PF08088">
    <property type="entry name" value="Toxin_19"/>
    <property type="match status" value="1"/>
</dbReference>
<dbReference type="PROSITE" id="PS60019">
    <property type="entry name" value="I_CONOTOXIN"/>
    <property type="match status" value="1"/>
</dbReference>
<feature type="chain" id="PRO_0000086872" description="Iota-conotoxin-like R11.15">
    <location>
        <begin position="1"/>
        <end position="42"/>
    </location>
</feature>
<feature type="disulfide bond" evidence="2">
    <location>
        <begin position="5"/>
        <end position="19"/>
    </location>
</feature>
<feature type="disulfide bond" evidence="2">
    <location>
        <begin position="12"/>
        <end position="22"/>
    </location>
</feature>
<feature type="disulfide bond" evidence="2">
    <location>
        <begin position="18"/>
        <end position="27"/>
    </location>
</feature>
<feature type="disulfide bond" evidence="2">
    <location>
        <begin position="21"/>
        <end position="36"/>
    </location>
</feature>
<protein>
    <recommendedName>
        <fullName>Iota-conotoxin-like R11.15</fullName>
    </recommendedName>
</protein>
<keyword id="KW-1015">Disulfide bond</keyword>
<keyword id="KW-0872">Ion channel impairing toxin</keyword>
<keyword id="KW-0528">Neurotoxin</keyword>
<keyword id="KW-0964">Secreted</keyword>
<keyword id="KW-0800">Toxin</keyword>
<keyword id="KW-0738">Voltage-gated sodium channel impairing toxin</keyword>
<accession>Q7Z0A2</accession>
<sequence length="42" mass="4386">GHVPCGKDGRKCGYHADCCNCCLSGICKPSTSWTGCSTSTFN</sequence>
<proteinExistence type="evidence at transcript level"/>
<comment type="function">
    <text evidence="1">Iota-conotoxins bind to voltage-gated sodium channels (Nav) and act as agonists by shifting the voltage-dependence of activation to more hyperpolarized levels. Produces general excitatory symptoms (By similarity).</text>
</comment>
<comment type="subcellular location">
    <subcellularLocation>
        <location evidence="1">Secreted</location>
    </subcellularLocation>
</comment>
<comment type="tissue specificity">
    <text>Expressed by the venom duct.</text>
</comment>
<comment type="domain">
    <text>The cysteine framework is XI (C-C-CC-CC-C-C).</text>
</comment>
<comment type="similarity">
    <text evidence="3">Belongs to the conotoxin I1 superfamily.</text>
</comment>
<organism>
    <name type="scientific">Conus radiatus</name>
    <name type="common">Rayed cone</name>
    <dbReference type="NCBI Taxonomy" id="61198"/>
    <lineage>
        <taxon>Eukaryota</taxon>
        <taxon>Metazoa</taxon>
        <taxon>Spiralia</taxon>
        <taxon>Lophotrochozoa</taxon>
        <taxon>Mollusca</taxon>
        <taxon>Gastropoda</taxon>
        <taxon>Caenogastropoda</taxon>
        <taxon>Neogastropoda</taxon>
        <taxon>Conoidea</taxon>
        <taxon>Conidae</taxon>
        <taxon>Conus</taxon>
        <taxon>Phasmoconus</taxon>
    </lineage>
</organism>
<evidence type="ECO:0000250" key="1"/>
<evidence type="ECO:0000250" key="2">
    <source>
        <dbReference type="UniProtKB" id="Q7Z094"/>
    </source>
</evidence>
<evidence type="ECO:0000305" key="3"/>